<name>HMUDK_BPS10</name>
<organism>
    <name type="scientific">Bacillus phage SP10</name>
    <name type="common">Bacillus phage SP-10</name>
    <dbReference type="NCBI Taxonomy" id="941058"/>
    <lineage>
        <taxon>Viruses</taxon>
        <taxon>Duplodnaviria</taxon>
        <taxon>Heunggongvirae</taxon>
        <taxon>Uroviricota</taxon>
        <taxon>Caudoviricetes</taxon>
        <taxon>Herelleviridae</taxon>
        <taxon>Spounavirinae</taxon>
    </lineage>
</organism>
<keyword id="KW-0945">Host-virus interaction</keyword>
<keyword id="KW-1090">Inhibition of host innate immune response by virus</keyword>
<keyword id="KW-0511">Multifunctional enzyme</keyword>
<keyword id="KW-1185">Reference proteome</keyword>
<keyword id="KW-1258">Restriction-modification system evasion by virus</keyword>
<keyword id="KW-0899">Viral immunoevasion</keyword>
<dbReference type="EMBL" id="AB605730">
    <property type="protein sequence ID" value="BAK52998.1"/>
    <property type="molecule type" value="Genomic_DNA"/>
</dbReference>
<dbReference type="RefSeq" id="YP_007003443.1">
    <property type="nucleotide sequence ID" value="NC_019487.1"/>
</dbReference>
<dbReference type="GeneID" id="14007383"/>
<dbReference type="KEGG" id="vg:14007383"/>
<dbReference type="OrthoDB" id="8230at10239"/>
<dbReference type="Proteomes" id="UP000207621">
    <property type="component" value="Genome"/>
</dbReference>
<dbReference type="GO" id="GO:0003824">
    <property type="term" value="F:catalytic activity"/>
    <property type="evidence" value="ECO:0007669"/>
    <property type="project" value="UniProtKB-KW"/>
</dbReference>
<dbReference type="GO" id="GO:0099018">
    <property type="term" value="P:symbiont-mediated evasion of host restriction-modification system"/>
    <property type="evidence" value="ECO:0007669"/>
    <property type="project" value="UniProtKB-KW"/>
</dbReference>
<dbReference type="GO" id="GO:0052170">
    <property type="term" value="P:symbiont-mediated suppression of host innate immune response"/>
    <property type="evidence" value="ECO:0007669"/>
    <property type="project" value="UniProtKB-KW"/>
</dbReference>
<dbReference type="InterPro" id="IPR040924">
    <property type="entry name" value="HMUDK/HMUD1"/>
</dbReference>
<dbReference type="InterPro" id="IPR040684">
    <property type="entry name" value="HMUDK_hel"/>
</dbReference>
<dbReference type="InterPro" id="IPR027417">
    <property type="entry name" value="P-loop_NTPase"/>
</dbReference>
<dbReference type="Pfam" id="PF18723">
    <property type="entry name" value="HMUDK_hel"/>
    <property type="match status" value="1"/>
</dbReference>
<dbReference type="Pfam" id="PF18748">
    <property type="entry name" value="HMUDK_HMUD1"/>
    <property type="match status" value="1"/>
</dbReference>
<dbReference type="SUPFAM" id="SSF52540">
    <property type="entry name" value="P-loop containing nucleoside triphosphate hydrolases"/>
    <property type="match status" value="1"/>
</dbReference>
<reference key="1">
    <citation type="journal article" date="2011" name="Biosci. Biotechnol. Biochem.">
        <title>The genome of Bacillus subtilis phage SP10: a comparative analysis with phage SPO1.</title>
        <authorList>
            <person name="Yee L.M."/>
            <person name="Matsumoto T."/>
            <person name="Yano K."/>
            <person name="Matsuoka S."/>
            <person name="Sadaie Y."/>
            <person name="Yoshikawa H."/>
            <person name="Asai K."/>
        </authorList>
    </citation>
    <scope>NUCLEOTIDE SEQUENCE [LARGE SCALE GENOMIC DNA]</scope>
    <scope>FUNCTION</scope>
</reference>
<reference key="2">
    <citation type="journal article" date="1981" name="J. Virol.">
        <title>Synthesis of deoxythymidylate and the unusual deoxynucleotide in mature DNA of Bacillus subtilis bacteriophage SP10 occurs by postreplicational modification of 5-hydroxymethyldeoxyuridylate.</title>
        <authorList>
            <person name="Witmer H."/>
        </authorList>
    </citation>
    <scope>FUNCTION</scope>
    <source>
        <strain>Mutant hmd1</strain>
        <strain>Mutant hmd2</strain>
    </source>
</reference>
<reference key="3">
    <citation type="journal article" date="1982" name="J. Virol.">
        <title>DNA Synthesis and Gene Expression in Bacillus subtilis Infected with Wild-Type and Hypermodification-Defective Bacteriophage SP10.</title>
        <authorList>
            <person name="Witmer H."/>
            <person name="Franks M."/>
        </authorList>
    </citation>
    <scope>FUNCTION</scope>
    <source>
        <strain>Mutant hmd1</strain>
        <strain>Mutant hmd2</strain>
    </source>
</reference>
<reference key="4">
    <citation type="journal article" date="2021" name="Nucleic Acids Res.">
        <title>Pathways of thymidine hypermodification.</title>
        <authorList>
            <person name="Lee Y.J."/>
            <person name="Dai N."/>
            <person name="Mueller S.I."/>
            <person name="Guan C."/>
            <person name="Parker M.J."/>
            <person name="Fraser M.E."/>
            <person name="Walsh S.E."/>
            <person name="Sridar J."/>
            <person name="Mulholland A."/>
            <person name="Nayak K."/>
            <person name="Sun Z."/>
            <person name="Lin Y.C."/>
            <person name="Comb D.G."/>
            <person name="Marks K."/>
            <person name="Gonzalez R."/>
            <person name="Dowling D.P."/>
            <person name="Bandarian V."/>
            <person name="Saleh L."/>
            <person name="Correa I.R."/>
            <person name="Weigele P.R."/>
        </authorList>
    </citation>
    <scope>FUNCTION</scope>
    <scope>CATALYTIC ACTIVITY</scope>
    <scope>DOMAIN</scope>
</reference>
<proteinExistence type="evidence at protein level"/>
<feature type="chain" id="PRO_0000456266" description="5-hmdU DNA kinase">
    <location>
        <begin position="1"/>
        <end position="637"/>
    </location>
</feature>
<feature type="region of interest" description="Disordered" evidence="1">
    <location>
        <begin position="249"/>
        <end position="269"/>
    </location>
</feature>
<accession>F8WQ30</accession>
<evidence type="ECO:0000256" key="1">
    <source>
        <dbReference type="SAM" id="MobiDB-lite"/>
    </source>
</evidence>
<evidence type="ECO:0000269" key="2">
    <source>
    </source>
</evidence>
<evidence type="ECO:0000269" key="3">
    <source>
    </source>
</evidence>
<evidence type="ECO:0000269" key="4">
    <source>
    </source>
</evidence>
<evidence type="ECO:0000269" key="5">
    <source>
    </source>
</evidence>
<evidence type="ECO:0000303" key="6">
    <source>
    </source>
</evidence>
<evidence type="ECO:0000305" key="7"/>
<protein>
    <recommendedName>
        <fullName evidence="6">5-hmdU DNA kinase</fullName>
    </recommendedName>
    <alternativeName>
        <fullName evidence="6">5-hydroxymethyluracil DNA kinase</fullName>
    </alternativeName>
    <alternativeName>
        <fullName evidence="6">P-loop kinase</fullName>
    </alternativeName>
    <alternativeName>
        <fullName>gp186</fullName>
    </alternativeName>
</protein>
<organismHost>
    <name type="scientific">Bacillus subtilis</name>
    <dbReference type="NCBI Taxonomy" id="1423"/>
</organismHost>
<comment type="function">
    <text evidence="2 3 4 5">Phosphorylates 5-hydroxymethyluracil (5hmdU) into 5-phosphomethyl-2'-deoxyuridine (5- PmdU) on DNA as a step in the pathway leading to thymidine hypermodifications in the viral genome (PubMed:34522950). The phosphate is added internally to the DNA polymer (PubMed:34522950). As a final result of the pathway of hypermodification, alpha-glutamylthymidine (YdTMP) substitutes for about 20% of the thymidines in the viral DNA, the 80% left are dTMP (PubMed:16789224, PubMed:34522950, PubMed:6792371). These modifications probably prevent degradation of viral genome by the host restriction-modification antiviral defense system (PubMed:21597187, PubMed:34522950).</text>
</comment>
<comment type="catalytic activity">
    <reaction evidence="4">
        <text>5-hydroxymethyl-dUMP in DNA + ATP = 5-phosphomethyl-dUMP in DNA + ADP + H(+)</text>
        <dbReference type="Rhea" id="RHEA:71543"/>
        <dbReference type="Rhea" id="RHEA-COMP:18039"/>
        <dbReference type="Rhea" id="RHEA-COMP:18041"/>
        <dbReference type="ChEBI" id="CHEBI:15378"/>
        <dbReference type="ChEBI" id="CHEBI:30616"/>
        <dbReference type="ChEBI" id="CHEBI:190917"/>
        <dbReference type="ChEBI" id="CHEBI:190918"/>
        <dbReference type="ChEBI" id="CHEBI:456216"/>
    </reaction>
</comment>
<comment type="domain">
    <text evidence="4">The N-terminus contains the 5-hmdU DNA kinase activity.</text>
</comment>
<comment type="miscellaneous">
    <text evidence="5">Mutants hmdl and hmd2 are heat-sensitive mutants defective in thymidine hypermodifications with accumulation of 5- PPmdU and 5hmdU, respectively.</text>
</comment>
<comment type="similarity">
    <text evidence="7">Belongs to the thymidylate kinase family. 5-hmdU DNA kinase subfamily.</text>
</comment>
<sequence>MKTKEEFHRIEISKFTEDLREAFGYKIQYRQDLVLVNIRGCNGAGKSTVPMQMLQTDPGAFMLTLDGKDKATVFPSYGFVAMGRYFSKTGGLDGFKNNEETLKVLKLLWELPFSIIMEGVISSTIFSTYCDLFKELEQRNNPKRAVGVLNLLPPFEVCLERIKKRTPEKFDSIKKDQIEGKWRTVNRNAQKFRDAGVTSWDEDNSVIDINDTVSWFFSSIKNNLQPEFTGLRLGVRFPTEEPVKALKKAEKGVKRGKKGRKTSPVAKTLDDNGDGAFLRSLKREIRPHWDPKYLNTPDDNVRLRRDPETGQTLWDMYFINLVERQNIWYRRVIQGKSKPWTDDPVMSTYHFTNVDRRLDRVTLHYIDKVLCNLEDSYESKKFLLLNTFIYRLFVRPETTDAMGYIFPETFEEDWERAKAALRARRESGEPVFTDAYFVNDLKSANPDRANSSNKTENAIHLIQFIIDHLDELAEFTFNPKNSMEEVIEKFTMIPAVGNFNAYEVALDLGIVKEMTGIDFVDWTPDHYANVGPGCKKGIEYVFEDLGNMSHLDIVFFITSVYKGELERLGLEYKYQEGCKELDLRALEGWCCEMSKYFNYYATERGYDWAKGKRPKKKMNLRTDDVSYLNPRISNLVK</sequence>